<name>BIOF_XYLFA</name>
<feature type="chain" id="PRO_0000381149" description="8-amino-7-oxononanoate synthase">
    <location>
        <begin position="1"/>
        <end position="401"/>
    </location>
</feature>
<feature type="binding site" evidence="1">
    <location>
        <position position="24"/>
    </location>
    <ligand>
        <name>substrate</name>
    </ligand>
</feature>
<feature type="binding site" evidence="1">
    <location>
        <begin position="111"/>
        <end position="112"/>
    </location>
    <ligand>
        <name>pyridoxal 5'-phosphate</name>
        <dbReference type="ChEBI" id="CHEBI:597326"/>
    </ligand>
</feature>
<feature type="binding site" evidence="1">
    <location>
        <position position="137"/>
    </location>
    <ligand>
        <name>substrate</name>
    </ligand>
</feature>
<feature type="binding site" evidence="1">
    <location>
        <position position="183"/>
    </location>
    <ligand>
        <name>pyridoxal 5'-phosphate</name>
        <dbReference type="ChEBI" id="CHEBI:597326"/>
    </ligand>
</feature>
<feature type="binding site" evidence="1">
    <location>
        <position position="211"/>
    </location>
    <ligand>
        <name>pyridoxal 5'-phosphate</name>
        <dbReference type="ChEBI" id="CHEBI:597326"/>
    </ligand>
</feature>
<feature type="binding site" evidence="1">
    <location>
        <position position="240"/>
    </location>
    <ligand>
        <name>pyridoxal 5'-phosphate</name>
        <dbReference type="ChEBI" id="CHEBI:597326"/>
    </ligand>
</feature>
<feature type="binding site" evidence="1">
    <location>
        <position position="357"/>
    </location>
    <ligand>
        <name>substrate</name>
    </ligand>
</feature>
<feature type="modified residue" description="N6-(pyridoxal phosphate)lysine" evidence="1">
    <location>
        <position position="243"/>
    </location>
</feature>
<protein>
    <recommendedName>
        <fullName evidence="1">8-amino-7-oxononanoate synthase</fullName>
        <shortName evidence="1">AONS</shortName>
        <ecNumber evidence="1">2.3.1.47</ecNumber>
    </recommendedName>
    <alternativeName>
        <fullName evidence="1">7-keto-8-amino-pelargonic acid synthase</fullName>
        <shortName evidence="1">7-KAP synthase</shortName>
        <shortName evidence="1">KAPA synthase</shortName>
    </alternativeName>
    <alternativeName>
        <fullName evidence="1">8-amino-7-ketopelargonate synthase</fullName>
    </alternativeName>
</protein>
<gene>
    <name evidence="1" type="primary">bioF</name>
    <name type="ordered locus">XF_1357</name>
</gene>
<dbReference type="EC" id="2.3.1.47" evidence="1"/>
<dbReference type="EMBL" id="AE003849">
    <property type="protein sequence ID" value="AAF84166.1"/>
    <property type="molecule type" value="Genomic_DNA"/>
</dbReference>
<dbReference type="PIR" id="D82692">
    <property type="entry name" value="D82692"/>
</dbReference>
<dbReference type="RefSeq" id="WP_010893861.1">
    <property type="nucleotide sequence ID" value="NC_002488.3"/>
</dbReference>
<dbReference type="SMR" id="Q9PDM2"/>
<dbReference type="STRING" id="160492.XF_1357"/>
<dbReference type="KEGG" id="xfa:XF_1357"/>
<dbReference type="eggNOG" id="COG0156">
    <property type="taxonomic scope" value="Bacteria"/>
</dbReference>
<dbReference type="HOGENOM" id="CLU_015846_11_2_6"/>
<dbReference type="UniPathway" id="UPA00078"/>
<dbReference type="Proteomes" id="UP000000812">
    <property type="component" value="Chromosome"/>
</dbReference>
<dbReference type="GO" id="GO:0008710">
    <property type="term" value="F:8-amino-7-oxononanoate synthase activity"/>
    <property type="evidence" value="ECO:0007669"/>
    <property type="project" value="UniProtKB-UniRule"/>
</dbReference>
<dbReference type="GO" id="GO:0030170">
    <property type="term" value="F:pyridoxal phosphate binding"/>
    <property type="evidence" value="ECO:0007669"/>
    <property type="project" value="UniProtKB-UniRule"/>
</dbReference>
<dbReference type="GO" id="GO:0009102">
    <property type="term" value="P:biotin biosynthetic process"/>
    <property type="evidence" value="ECO:0007669"/>
    <property type="project" value="UniProtKB-UniRule"/>
</dbReference>
<dbReference type="Gene3D" id="3.90.1150.10">
    <property type="entry name" value="Aspartate Aminotransferase, domain 1"/>
    <property type="match status" value="1"/>
</dbReference>
<dbReference type="Gene3D" id="3.40.640.10">
    <property type="entry name" value="Type I PLP-dependent aspartate aminotransferase-like (Major domain)"/>
    <property type="match status" value="1"/>
</dbReference>
<dbReference type="HAMAP" id="MF_01693">
    <property type="entry name" value="BioF_aminotrans_2"/>
    <property type="match status" value="1"/>
</dbReference>
<dbReference type="InterPro" id="IPR001917">
    <property type="entry name" value="Aminotrans_II_pyridoxalP_BS"/>
</dbReference>
<dbReference type="InterPro" id="IPR004839">
    <property type="entry name" value="Aminotransferase_I/II_large"/>
</dbReference>
<dbReference type="InterPro" id="IPR050087">
    <property type="entry name" value="AON_synthase_class-II"/>
</dbReference>
<dbReference type="InterPro" id="IPR004723">
    <property type="entry name" value="AONS_Archaea/Proteobacteria"/>
</dbReference>
<dbReference type="InterPro" id="IPR022834">
    <property type="entry name" value="AONS_Proteobacteria"/>
</dbReference>
<dbReference type="InterPro" id="IPR015424">
    <property type="entry name" value="PyrdxlP-dep_Trfase"/>
</dbReference>
<dbReference type="InterPro" id="IPR015421">
    <property type="entry name" value="PyrdxlP-dep_Trfase_major"/>
</dbReference>
<dbReference type="InterPro" id="IPR015422">
    <property type="entry name" value="PyrdxlP-dep_Trfase_small"/>
</dbReference>
<dbReference type="NCBIfam" id="TIGR00858">
    <property type="entry name" value="bioF"/>
    <property type="match status" value="1"/>
</dbReference>
<dbReference type="PANTHER" id="PTHR13693:SF100">
    <property type="entry name" value="8-AMINO-7-OXONONANOATE SYNTHASE"/>
    <property type="match status" value="1"/>
</dbReference>
<dbReference type="PANTHER" id="PTHR13693">
    <property type="entry name" value="CLASS II AMINOTRANSFERASE/8-AMINO-7-OXONONANOATE SYNTHASE"/>
    <property type="match status" value="1"/>
</dbReference>
<dbReference type="Pfam" id="PF00155">
    <property type="entry name" value="Aminotran_1_2"/>
    <property type="match status" value="1"/>
</dbReference>
<dbReference type="SUPFAM" id="SSF53383">
    <property type="entry name" value="PLP-dependent transferases"/>
    <property type="match status" value="1"/>
</dbReference>
<dbReference type="PROSITE" id="PS00599">
    <property type="entry name" value="AA_TRANSFER_CLASS_2"/>
    <property type="match status" value="1"/>
</dbReference>
<organism>
    <name type="scientific">Xylella fastidiosa (strain 9a5c)</name>
    <dbReference type="NCBI Taxonomy" id="160492"/>
    <lineage>
        <taxon>Bacteria</taxon>
        <taxon>Pseudomonadati</taxon>
        <taxon>Pseudomonadota</taxon>
        <taxon>Gammaproteobacteria</taxon>
        <taxon>Lysobacterales</taxon>
        <taxon>Lysobacteraceae</taxon>
        <taxon>Xylella</taxon>
    </lineage>
</organism>
<comment type="function">
    <text evidence="1">Catalyzes the decarboxylative condensation of pimeloyl-[acyl-carrier protein] and L-alanine to produce 8-amino-7-oxononanoate (AON), [acyl-carrier protein], and carbon dioxide.</text>
</comment>
<comment type="catalytic activity">
    <reaction evidence="1">
        <text>6-carboxyhexanoyl-[ACP] + L-alanine + H(+) = (8S)-8-amino-7-oxononanoate + holo-[ACP] + CO2</text>
        <dbReference type="Rhea" id="RHEA:42288"/>
        <dbReference type="Rhea" id="RHEA-COMP:9685"/>
        <dbReference type="Rhea" id="RHEA-COMP:9955"/>
        <dbReference type="ChEBI" id="CHEBI:15378"/>
        <dbReference type="ChEBI" id="CHEBI:16526"/>
        <dbReference type="ChEBI" id="CHEBI:57972"/>
        <dbReference type="ChEBI" id="CHEBI:64479"/>
        <dbReference type="ChEBI" id="CHEBI:78846"/>
        <dbReference type="ChEBI" id="CHEBI:149468"/>
        <dbReference type="EC" id="2.3.1.47"/>
    </reaction>
</comment>
<comment type="cofactor">
    <cofactor evidence="1">
        <name>pyridoxal 5'-phosphate</name>
        <dbReference type="ChEBI" id="CHEBI:597326"/>
    </cofactor>
</comment>
<comment type="pathway">
    <text evidence="1">Cofactor biosynthesis; biotin biosynthesis.</text>
</comment>
<comment type="subunit">
    <text evidence="1">Homodimer.</text>
</comment>
<comment type="similarity">
    <text evidence="1">Belongs to the class-II pyridoxal-phosphate-dependent aminotransferase family. BioF subfamily.</text>
</comment>
<keyword id="KW-0093">Biotin biosynthesis</keyword>
<keyword id="KW-0663">Pyridoxal phosphate</keyword>
<keyword id="KW-0808">Transferase</keyword>
<sequence length="401" mass="43861">MIRPDLNERILSLRKLRLAQCRTRTRRTIERRNGVRLEINGSWLVEFCSNDYLGLAQHFEIIAALQDAAARDGIGATASHLICGHHAIHKALEYELAEWLGYPRALLFGNGFTANLAVQQALLTKENDICVQDRLNHASLIDATRLAGCRLRRYPHLDVDGAAHQLKNAPEGAAMLATDGIFSMDGDIAPLRALSLVARTQQALMYVDDAHGIGVTGPQGSGCVAAAWLSVEEVPLQLVTLSKALGGYGAALLGSATLIQHLAETARPYIYTTALPPAQAAAALTAIRIARRDEWRRQRLQELVERFRENSRRHGLEIMDSETPIQPLQCGDETTTMAMSAALEREGFLVNAIRPPTVPEGKSRLRVTLSALHTTEQIDTLVQALARSRDALATEAAPVQV</sequence>
<evidence type="ECO:0000255" key="1">
    <source>
        <dbReference type="HAMAP-Rule" id="MF_01693"/>
    </source>
</evidence>
<reference key="1">
    <citation type="journal article" date="2000" name="Nature">
        <title>The genome sequence of the plant pathogen Xylella fastidiosa.</title>
        <authorList>
            <person name="Simpson A.J.G."/>
            <person name="Reinach F.C."/>
            <person name="Arruda P."/>
            <person name="Abreu F.A."/>
            <person name="Acencio M."/>
            <person name="Alvarenga R."/>
            <person name="Alves L.M.C."/>
            <person name="Araya J.E."/>
            <person name="Baia G.S."/>
            <person name="Baptista C.S."/>
            <person name="Barros M.H."/>
            <person name="Bonaccorsi E.D."/>
            <person name="Bordin S."/>
            <person name="Bove J.M."/>
            <person name="Briones M.R.S."/>
            <person name="Bueno M.R.P."/>
            <person name="Camargo A.A."/>
            <person name="Camargo L.E.A."/>
            <person name="Carraro D.M."/>
            <person name="Carrer H."/>
            <person name="Colauto N.B."/>
            <person name="Colombo C."/>
            <person name="Costa F.F."/>
            <person name="Costa M.C.R."/>
            <person name="Costa-Neto C.M."/>
            <person name="Coutinho L.L."/>
            <person name="Cristofani M."/>
            <person name="Dias-Neto E."/>
            <person name="Docena C."/>
            <person name="El-Dorry H."/>
            <person name="Facincani A.P."/>
            <person name="Ferreira A.J.S."/>
            <person name="Ferreira V.C.A."/>
            <person name="Ferro J.A."/>
            <person name="Fraga J.S."/>
            <person name="Franca S.C."/>
            <person name="Franco M.C."/>
            <person name="Frohme M."/>
            <person name="Furlan L.R."/>
            <person name="Garnier M."/>
            <person name="Goldman G.H."/>
            <person name="Goldman M.H.S."/>
            <person name="Gomes S.L."/>
            <person name="Gruber A."/>
            <person name="Ho P.L."/>
            <person name="Hoheisel J.D."/>
            <person name="Junqueira M.L."/>
            <person name="Kemper E.L."/>
            <person name="Kitajima J.P."/>
            <person name="Krieger J.E."/>
            <person name="Kuramae E.E."/>
            <person name="Laigret F."/>
            <person name="Lambais M.R."/>
            <person name="Leite L.C.C."/>
            <person name="Lemos E.G.M."/>
            <person name="Lemos M.V.F."/>
            <person name="Lopes S.A."/>
            <person name="Lopes C.R."/>
            <person name="Machado J.A."/>
            <person name="Machado M.A."/>
            <person name="Madeira A.M.B.N."/>
            <person name="Madeira H.M.F."/>
            <person name="Marino C.L."/>
            <person name="Marques M.V."/>
            <person name="Martins E.A.L."/>
            <person name="Martins E.M.F."/>
            <person name="Matsukuma A.Y."/>
            <person name="Menck C.F.M."/>
            <person name="Miracca E.C."/>
            <person name="Miyaki C.Y."/>
            <person name="Monteiro-Vitorello C.B."/>
            <person name="Moon D.H."/>
            <person name="Nagai M.A."/>
            <person name="Nascimento A.L.T.O."/>
            <person name="Netto L.E.S."/>
            <person name="Nhani A. Jr."/>
            <person name="Nobrega F.G."/>
            <person name="Nunes L.R."/>
            <person name="Oliveira M.A."/>
            <person name="de Oliveira M.C."/>
            <person name="de Oliveira R.C."/>
            <person name="Palmieri D.A."/>
            <person name="Paris A."/>
            <person name="Peixoto B.R."/>
            <person name="Pereira G.A.G."/>
            <person name="Pereira H.A. Jr."/>
            <person name="Pesquero J.B."/>
            <person name="Quaggio R.B."/>
            <person name="Roberto P.G."/>
            <person name="Rodrigues V."/>
            <person name="de Rosa A.J.M."/>
            <person name="de Rosa V.E. Jr."/>
            <person name="de Sa R.G."/>
            <person name="Santelli R.V."/>
            <person name="Sawasaki H.E."/>
            <person name="da Silva A.C.R."/>
            <person name="da Silva A.M."/>
            <person name="da Silva F.R."/>
            <person name="Silva W.A. Jr."/>
            <person name="da Silveira J.F."/>
            <person name="Silvestri M.L.Z."/>
            <person name="Siqueira W.J."/>
            <person name="de Souza A.A."/>
            <person name="de Souza A.P."/>
            <person name="Terenzi M.F."/>
            <person name="Truffi D."/>
            <person name="Tsai S.M."/>
            <person name="Tsuhako M.H."/>
            <person name="Vallada H."/>
            <person name="Van Sluys M.A."/>
            <person name="Verjovski-Almeida S."/>
            <person name="Vettore A.L."/>
            <person name="Zago M.A."/>
            <person name="Zatz M."/>
            <person name="Meidanis J."/>
            <person name="Setubal J.C."/>
        </authorList>
    </citation>
    <scope>NUCLEOTIDE SEQUENCE [LARGE SCALE GENOMIC DNA]</scope>
    <source>
        <strain>9a5c</strain>
    </source>
</reference>
<accession>Q9PDM2</accession>
<proteinExistence type="inferred from homology"/>